<evidence type="ECO:0000255" key="1">
    <source>
        <dbReference type="HAMAP-Rule" id="MF_01856"/>
    </source>
</evidence>
<reference key="1">
    <citation type="journal article" date="2009" name="PLoS Genet.">
        <title>Organised genome dynamics in the Escherichia coli species results in highly diverse adaptive paths.</title>
        <authorList>
            <person name="Touchon M."/>
            <person name="Hoede C."/>
            <person name="Tenaillon O."/>
            <person name="Barbe V."/>
            <person name="Baeriswyl S."/>
            <person name="Bidet P."/>
            <person name="Bingen E."/>
            <person name="Bonacorsi S."/>
            <person name="Bouchier C."/>
            <person name="Bouvet O."/>
            <person name="Calteau A."/>
            <person name="Chiapello H."/>
            <person name="Clermont O."/>
            <person name="Cruveiller S."/>
            <person name="Danchin A."/>
            <person name="Diard M."/>
            <person name="Dossat C."/>
            <person name="Karoui M.E."/>
            <person name="Frapy E."/>
            <person name="Garry L."/>
            <person name="Ghigo J.M."/>
            <person name="Gilles A.M."/>
            <person name="Johnson J."/>
            <person name="Le Bouguenec C."/>
            <person name="Lescat M."/>
            <person name="Mangenot S."/>
            <person name="Martinez-Jehanne V."/>
            <person name="Matic I."/>
            <person name="Nassif X."/>
            <person name="Oztas S."/>
            <person name="Petit M.A."/>
            <person name="Pichon C."/>
            <person name="Rouy Z."/>
            <person name="Ruf C.S."/>
            <person name="Schneider D."/>
            <person name="Tourret J."/>
            <person name="Vacherie B."/>
            <person name="Vallenet D."/>
            <person name="Medigue C."/>
            <person name="Rocha E.P.C."/>
            <person name="Denamur E."/>
        </authorList>
    </citation>
    <scope>NUCLEOTIDE SEQUENCE [LARGE SCALE GENOMIC DNA]</scope>
    <source>
        <strain>IAI1</strain>
    </source>
</reference>
<protein>
    <recommendedName>
        <fullName evidence="1">Ribosomal RNA small subunit methyltransferase B</fullName>
        <ecNumber evidence="1">2.1.1.176</ecNumber>
    </recommendedName>
    <alternativeName>
        <fullName evidence="1">16S rRNA m5C967 methyltransferase</fullName>
    </alternativeName>
    <alternativeName>
        <fullName evidence="1">rRNA (cytosine-C(5)-)-methyltransferase RsmB</fullName>
    </alternativeName>
</protein>
<gene>
    <name evidence="1" type="primary">rsmB</name>
    <name evidence="1" type="synonym">sun</name>
    <name type="ordered locus">ECIAI1_3438</name>
</gene>
<comment type="function">
    <text evidence="1">Specifically methylates the cytosine at position 967 (m5C967) of 16S rRNA.</text>
</comment>
<comment type="catalytic activity">
    <reaction evidence="1">
        <text>cytidine(967) in 16S rRNA + S-adenosyl-L-methionine = 5-methylcytidine(967) in 16S rRNA + S-adenosyl-L-homocysteine + H(+)</text>
        <dbReference type="Rhea" id="RHEA:42748"/>
        <dbReference type="Rhea" id="RHEA-COMP:10219"/>
        <dbReference type="Rhea" id="RHEA-COMP:10220"/>
        <dbReference type="ChEBI" id="CHEBI:15378"/>
        <dbReference type="ChEBI" id="CHEBI:57856"/>
        <dbReference type="ChEBI" id="CHEBI:59789"/>
        <dbReference type="ChEBI" id="CHEBI:74483"/>
        <dbReference type="ChEBI" id="CHEBI:82748"/>
        <dbReference type="EC" id="2.1.1.176"/>
    </reaction>
</comment>
<comment type="subcellular location">
    <subcellularLocation>
        <location evidence="1">Cytoplasm</location>
    </subcellularLocation>
</comment>
<comment type="similarity">
    <text evidence="1">Belongs to the class I-like SAM-binding methyltransferase superfamily. RsmB/NOP family.</text>
</comment>
<proteinExistence type="inferred from homology"/>
<name>RSMB_ECO8A</name>
<feature type="chain" id="PRO_1000188693" description="Ribosomal RNA small subunit methyltransferase B">
    <location>
        <begin position="1"/>
        <end position="429"/>
    </location>
</feature>
<feature type="active site" description="Nucleophile" evidence="1">
    <location>
        <position position="375"/>
    </location>
</feature>
<feature type="binding site" evidence="1">
    <location>
        <begin position="254"/>
        <end position="260"/>
    </location>
    <ligand>
        <name>S-adenosyl-L-methionine</name>
        <dbReference type="ChEBI" id="CHEBI:59789"/>
    </ligand>
</feature>
<feature type="binding site" evidence="1">
    <location>
        <position position="277"/>
    </location>
    <ligand>
        <name>S-adenosyl-L-methionine</name>
        <dbReference type="ChEBI" id="CHEBI:59789"/>
    </ligand>
</feature>
<feature type="binding site" evidence="1">
    <location>
        <position position="303"/>
    </location>
    <ligand>
        <name>S-adenosyl-L-methionine</name>
        <dbReference type="ChEBI" id="CHEBI:59789"/>
    </ligand>
</feature>
<feature type="binding site" evidence="1">
    <location>
        <position position="322"/>
    </location>
    <ligand>
        <name>S-adenosyl-L-methionine</name>
        <dbReference type="ChEBI" id="CHEBI:59789"/>
    </ligand>
</feature>
<dbReference type="EC" id="2.1.1.176" evidence="1"/>
<dbReference type="EMBL" id="CU928160">
    <property type="protein sequence ID" value="CAR00240.1"/>
    <property type="molecule type" value="Genomic_DNA"/>
</dbReference>
<dbReference type="RefSeq" id="WP_000744779.1">
    <property type="nucleotide sequence ID" value="NC_011741.1"/>
</dbReference>
<dbReference type="SMR" id="B7M0Z4"/>
<dbReference type="GeneID" id="75204129"/>
<dbReference type="KEGG" id="ecr:ECIAI1_3438"/>
<dbReference type="HOGENOM" id="CLU_005316_0_4_6"/>
<dbReference type="GO" id="GO:0005829">
    <property type="term" value="C:cytosol"/>
    <property type="evidence" value="ECO:0007669"/>
    <property type="project" value="TreeGrafter"/>
</dbReference>
<dbReference type="GO" id="GO:0003723">
    <property type="term" value="F:RNA binding"/>
    <property type="evidence" value="ECO:0007669"/>
    <property type="project" value="UniProtKB-KW"/>
</dbReference>
<dbReference type="GO" id="GO:0009383">
    <property type="term" value="F:rRNA (cytosine-C5-)-methyltransferase activity"/>
    <property type="evidence" value="ECO:0007669"/>
    <property type="project" value="TreeGrafter"/>
</dbReference>
<dbReference type="GO" id="GO:0006355">
    <property type="term" value="P:regulation of DNA-templated transcription"/>
    <property type="evidence" value="ECO:0007669"/>
    <property type="project" value="InterPro"/>
</dbReference>
<dbReference type="GO" id="GO:0070475">
    <property type="term" value="P:rRNA base methylation"/>
    <property type="evidence" value="ECO:0007669"/>
    <property type="project" value="TreeGrafter"/>
</dbReference>
<dbReference type="CDD" id="cd02440">
    <property type="entry name" value="AdoMet_MTases"/>
    <property type="match status" value="1"/>
</dbReference>
<dbReference type="CDD" id="cd00620">
    <property type="entry name" value="Methyltransferase_Sun"/>
    <property type="match status" value="1"/>
</dbReference>
<dbReference type="FunFam" id="1.10.287.730:FF:000001">
    <property type="entry name" value="Ribosomal RNA small subunit methyltransferase B"/>
    <property type="match status" value="1"/>
</dbReference>
<dbReference type="FunFam" id="1.10.940.10:FF:000002">
    <property type="entry name" value="Ribosomal RNA small subunit methyltransferase B"/>
    <property type="match status" value="1"/>
</dbReference>
<dbReference type="FunFam" id="3.30.70.1170:FF:000002">
    <property type="entry name" value="Ribosomal RNA small subunit methyltransferase B"/>
    <property type="match status" value="1"/>
</dbReference>
<dbReference type="FunFam" id="3.40.50.150:FF:000022">
    <property type="entry name" value="Ribosomal RNA small subunit methyltransferase B"/>
    <property type="match status" value="1"/>
</dbReference>
<dbReference type="Gene3D" id="1.10.287.730">
    <property type="entry name" value="Helix hairpin bin"/>
    <property type="match status" value="1"/>
</dbReference>
<dbReference type="Gene3D" id="1.10.940.10">
    <property type="entry name" value="NusB-like"/>
    <property type="match status" value="1"/>
</dbReference>
<dbReference type="Gene3D" id="3.30.70.1170">
    <property type="entry name" value="Sun protein, domain 3"/>
    <property type="match status" value="1"/>
</dbReference>
<dbReference type="Gene3D" id="3.40.50.150">
    <property type="entry name" value="Vaccinia Virus protein VP39"/>
    <property type="match status" value="1"/>
</dbReference>
<dbReference type="HAMAP" id="MF_01856">
    <property type="entry name" value="16SrRNA_methyltr_B"/>
    <property type="match status" value="1"/>
</dbReference>
<dbReference type="InterPro" id="IPR049560">
    <property type="entry name" value="MeTrfase_RsmB-F_NOP2_cat"/>
</dbReference>
<dbReference type="InterPro" id="IPR001678">
    <property type="entry name" value="MeTrfase_RsmB-F_NOP2_dom"/>
</dbReference>
<dbReference type="InterPro" id="IPR035926">
    <property type="entry name" value="NusB-like_sf"/>
</dbReference>
<dbReference type="InterPro" id="IPR006027">
    <property type="entry name" value="NusB_RsmB_TIM44"/>
</dbReference>
<dbReference type="InterPro" id="IPR023267">
    <property type="entry name" value="RCMT"/>
</dbReference>
<dbReference type="InterPro" id="IPR004573">
    <property type="entry name" value="rRNA_ssu_MeTfrase_B"/>
</dbReference>
<dbReference type="InterPro" id="IPR023541">
    <property type="entry name" value="rRNA_ssu_MeTfrase_B_ent"/>
</dbReference>
<dbReference type="InterPro" id="IPR054728">
    <property type="entry name" value="RsmB-like_ferredoxin"/>
</dbReference>
<dbReference type="InterPro" id="IPR048019">
    <property type="entry name" value="RsmB-like_N"/>
</dbReference>
<dbReference type="InterPro" id="IPR018314">
    <property type="entry name" value="RsmB/NOL1/NOP2-like_CS"/>
</dbReference>
<dbReference type="InterPro" id="IPR029063">
    <property type="entry name" value="SAM-dependent_MTases_sf"/>
</dbReference>
<dbReference type="NCBIfam" id="NF008149">
    <property type="entry name" value="PRK10901.1"/>
    <property type="match status" value="1"/>
</dbReference>
<dbReference type="NCBIfam" id="NF011494">
    <property type="entry name" value="PRK14902.1"/>
    <property type="match status" value="1"/>
</dbReference>
<dbReference type="NCBIfam" id="TIGR00563">
    <property type="entry name" value="rsmB"/>
    <property type="match status" value="1"/>
</dbReference>
<dbReference type="PANTHER" id="PTHR22807:SF61">
    <property type="entry name" value="NOL1_NOP2_SUN FAMILY PROTEIN _ ANTITERMINATION NUSB DOMAIN-CONTAINING PROTEIN"/>
    <property type="match status" value="1"/>
</dbReference>
<dbReference type="PANTHER" id="PTHR22807">
    <property type="entry name" value="NOP2 YEAST -RELATED NOL1/NOP2/FMU SUN DOMAIN-CONTAINING"/>
    <property type="match status" value="1"/>
</dbReference>
<dbReference type="Pfam" id="PF01189">
    <property type="entry name" value="Methyltr_RsmB-F"/>
    <property type="match status" value="1"/>
</dbReference>
<dbReference type="Pfam" id="PF01029">
    <property type="entry name" value="NusB"/>
    <property type="match status" value="1"/>
</dbReference>
<dbReference type="Pfam" id="PF22458">
    <property type="entry name" value="RsmF-B_ferredox"/>
    <property type="match status" value="1"/>
</dbReference>
<dbReference type="PRINTS" id="PR02008">
    <property type="entry name" value="RCMTFAMILY"/>
</dbReference>
<dbReference type="SUPFAM" id="SSF48013">
    <property type="entry name" value="NusB-like"/>
    <property type="match status" value="1"/>
</dbReference>
<dbReference type="SUPFAM" id="SSF53335">
    <property type="entry name" value="S-adenosyl-L-methionine-dependent methyltransferases"/>
    <property type="match status" value="1"/>
</dbReference>
<dbReference type="PROSITE" id="PS01153">
    <property type="entry name" value="NOL1_NOP2_SUN"/>
    <property type="match status" value="1"/>
</dbReference>
<dbReference type="PROSITE" id="PS51686">
    <property type="entry name" value="SAM_MT_RSMB_NOP"/>
    <property type="match status" value="1"/>
</dbReference>
<organism>
    <name type="scientific">Escherichia coli O8 (strain IAI1)</name>
    <dbReference type="NCBI Taxonomy" id="585034"/>
    <lineage>
        <taxon>Bacteria</taxon>
        <taxon>Pseudomonadati</taxon>
        <taxon>Pseudomonadota</taxon>
        <taxon>Gammaproteobacteria</taxon>
        <taxon>Enterobacterales</taxon>
        <taxon>Enterobacteriaceae</taxon>
        <taxon>Escherichia</taxon>
    </lineage>
</organism>
<keyword id="KW-0963">Cytoplasm</keyword>
<keyword id="KW-0489">Methyltransferase</keyword>
<keyword id="KW-0694">RNA-binding</keyword>
<keyword id="KW-0698">rRNA processing</keyword>
<keyword id="KW-0949">S-adenosyl-L-methionine</keyword>
<keyword id="KW-0808">Transferase</keyword>
<accession>B7M0Z4</accession>
<sequence length="429" mass="48319">MKKQRNLRSMAAQAVEQVVEQGQSLSNILPPLQQKVSDKDKALLQELCFGVLRTLSQLDWLINKLMARPMTGKQRTVHYLIMVGLYQLLYTRIPPHAALAETVEGAIAIKRPQLKGLINGVLRQFQRQQEELLAEFNASDARYLHPSWLLKRLQKAYPEQWQSIVEANNQRPPMWLRVNRTHHSRDSWLALLDEAGMKGFPHADYPDAVRLETPAPVHALPGFEDGWVTVQDASAQGCMTWLAPQNGEHILDLCAAPGGKTTHILEVAPEAQVVAVDIDEQRLSRVYDNLKRLGMKATVKQGDGRYPSQWCGEQQFDRILLDAPCSATGVIRRHPDIKWLRRDRDIPELAQLQSEILDAIWPHLKSGGTLVYATCSVLPEENSLQIKAFLQRTADAELCETGTPEQPGKQNLPGAEEGDGFFYAKLIKK</sequence>